<dbReference type="EMBL" id="BC077605">
    <property type="protein sequence ID" value="AAH77605.1"/>
    <property type="molecule type" value="mRNA"/>
</dbReference>
<dbReference type="RefSeq" id="NP_001086886.1">
    <property type="nucleotide sequence ID" value="NM_001093417.1"/>
</dbReference>
<dbReference type="DNASU" id="446721"/>
<dbReference type="GeneID" id="446721"/>
<dbReference type="KEGG" id="xla:446721"/>
<dbReference type="AGR" id="Xenbase:XB-GENE-955407"/>
<dbReference type="CTD" id="446721"/>
<dbReference type="Xenbase" id="XB-GENE-955407">
    <property type="gene designation" value="KIAA2013.S"/>
</dbReference>
<dbReference type="OrthoDB" id="10017443at2759"/>
<dbReference type="Proteomes" id="UP000186698">
    <property type="component" value="Chromosome 7S"/>
</dbReference>
<dbReference type="Bgee" id="446721">
    <property type="expression patterns" value="Expressed in internal ear and 6 other cell types or tissues"/>
</dbReference>
<dbReference type="GO" id="GO:0016020">
    <property type="term" value="C:membrane"/>
    <property type="evidence" value="ECO:0007669"/>
    <property type="project" value="UniProtKB-SubCell"/>
</dbReference>
<dbReference type="InterPro" id="IPR018795">
    <property type="entry name" value="K2013-like"/>
</dbReference>
<dbReference type="PANTHER" id="PTHR31386:SF2">
    <property type="entry name" value="SIMILAR TO RIKEN CDNA 2510039O18"/>
    <property type="match status" value="1"/>
</dbReference>
<dbReference type="PANTHER" id="PTHR31386">
    <property type="entry name" value="UNCHARACTERIZED PROTEIN KIAA2013"/>
    <property type="match status" value="1"/>
</dbReference>
<dbReference type="Pfam" id="PF10222">
    <property type="entry name" value="DUF2152"/>
    <property type="match status" value="1"/>
</dbReference>
<keyword id="KW-0325">Glycoprotein</keyword>
<keyword id="KW-0472">Membrane</keyword>
<keyword id="KW-1185">Reference proteome</keyword>
<keyword id="KW-0732">Signal</keyword>
<keyword id="KW-0812">Transmembrane</keyword>
<keyword id="KW-1133">Transmembrane helix</keyword>
<comment type="subcellular location">
    <subcellularLocation>
        <location evidence="2">Membrane</location>
        <topology evidence="2">Single-pass type I membrane protein</topology>
    </subcellularLocation>
</comment>
<organism>
    <name type="scientific">Xenopus laevis</name>
    <name type="common">African clawed frog</name>
    <dbReference type="NCBI Taxonomy" id="8355"/>
    <lineage>
        <taxon>Eukaryota</taxon>
        <taxon>Metazoa</taxon>
        <taxon>Chordata</taxon>
        <taxon>Craniata</taxon>
        <taxon>Vertebrata</taxon>
        <taxon>Euteleostomi</taxon>
        <taxon>Amphibia</taxon>
        <taxon>Batrachia</taxon>
        <taxon>Anura</taxon>
        <taxon>Pipoidea</taxon>
        <taxon>Pipidae</taxon>
        <taxon>Xenopodinae</taxon>
        <taxon>Xenopus</taxon>
        <taxon>Xenopus</taxon>
    </lineage>
</organism>
<proteinExistence type="evidence at transcript level"/>
<protein>
    <recommendedName>
        <fullName>Uncharacterized protein KIAA2013 homolog</fullName>
    </recommendedName>
</protein>
<name>K2013_XENLA</name>
<feature type="signal peptide" evidence="1">
    <location>
        <begin position="1"/>
        <end position="40"/>
    </location>
</feature>
<feature type="chain" id="PRO_0000293470" description="Uncharacterized protein KIAA2013 homolog">
    <location>
        <begin position="41"/>
        <end position="604"/>
    </location>
</feature>
<feature type="topological domain" description="Extracellular" evidence="1">
    <location>
        <begin position="41"/>
        <end position="563"/>
    </location>
</feature>
<feature type="transmembrane region" description="Helical" evidence="1">
    <location>
        <begin position="564"/>
        <end position="584"/>
    </location>
</feature>
<feature type="topological domain" description="Cytoplasmic" evidence="1">
    <location>
        <begin position="585"/>
        <end position="604"/>
    </location>
</feature>
<feature type="glycosylation site" description="N-linked (GlcNAc...) asparagine" evidence="1">
    <location>
        <position position="337"/>
    </location>
</feature>
<accession>Q6DDG2</accession>
<sequence length="604" mass="68521">MWLQQRIKVFPGLLSSSWARRVLAVSGFLVIIYWYIFSGSHYRSFWYSGKQWGVSGACLQAQIVQWKTLAEKGDVVMVSFPGEEIKLQGPAMVGNGQIIVDVGKNNLWVSSLSVLFHLTNYSPLTLFKNVGALAETHATAIFLKEGLIRTIRCLQVEASDSPRDCVTVREDHFAHRSRPHVYVQNIHITNPSDRVVTFDISSQKPLTGETFSTSLEKVQEKQFLLSSGRVSVEDGKIILVVVATKKLASRLQVSPKSEHDETVLSVVYASEPIDPAKLSDTFSKLRENAKKEMFELMHMKTEDLFHEHQQIWSDLIVSGIEMKKITDLHTPSRDTINITLYYMLSCSLAPLVDPALSNEEREKMESFLNYADHCFTGHSSMHAENLWPGSLSGITQLLQLWDLWKLTLQKRGCKSLVSAGAHGLMQGMLLSFGGLQFTENHLQFQSDPHVLHNSYSLRGIHYNKDLINLAVLLDQDEKPFLHVSVKFQDKLVKLYACEAGCLNEPVELTSEVRGHIFPVLITQPLTPLLYISTDLTHLQDLRHTLHLKEILAHEEHMAKQYRGLPFLFWFSVASLITLFHLFLFKLIYNEYCGPGAKPLFRSKV</sequence>
<evidence type="ECO:0000255" key="1"/>
<evidence type="ECO:0000305" key="2"/>
<reference key="1">
    <citation type="submission" date="2004-07" db="EMBL/GenBank/DDBJ databases">
        <authorList>
            <consortium name="NIH - Xenopus Gene Collection (XGC) project"/>
        </authorList>
    </citation>
    <scope>NUCLEOTIDE SEQUENCE [LARGE SCALE MRNA]</scope>
    <source>
        <tissue>Oocyte</tissue>
    </source>
</reference>